<evidence type="ECO:0000250" key="1"/>
<evidence type="ECO:0000256" key="2">
    <source>
        <dbReference type="SAM" id="MobiDB-lite"/>
    </source>
</evidence>
<evidence type="ECO:0000305" key="3"/>
<sequence>MSGINGAGPSNFFWRWRADDEPVTERERDSSSGANLTNSPQLRPESPTVSGRRLLRSNALSRQTREWQETTSASAERATPPVEPRQPPEAQPAERIVAERIVQELVRAGANLNNVRTMLRNVMDNNAVAFSRVEWNILLQHFPDMHTNGISSDSVLANELRQTLRQVVHQQRTQRALAPILSPAPSRPVASSSRSSQRTLLGRFTGWMAPRQTSSSSQATSSTSVDRHPQDLNQLESLRLADAERRNRSANQTDTDEALRRLTQAGVDMERLSTSLGRYIHSFQPAPPDLRRLLESVGIDPDIPEELTLVNNPVLNLNVALNRMLASRQATTESSSVFPSRAGDTRVRTLPVMPEREDNENNVAYGVRLLRLNPEAEVERVVEAFITDPSSRPEVVADIHAVLRSITSQFRQLRTISKADAESQDFRDAADYPDDPTSCLFGEDLSLSNPHQQVIGLAGESTDILQPYSQEGNKALRFMDMKKLAEHLASKPVHPMNRDRLDDKNIAGYAFRVVPD</sequence>
<keyword id="KW-0928">Hypersensitive response elicitation</keyword>
<keyword id="KW-0964">Secreted</keyword>
<keyword id="KW-0843">Virulence</keyword>
<organism>
    <name type="scientific">Pseudomonas syringae pv. syringae (strain B728a)</name>
    <dbReference type="NCBI Taxonomy" id="205918"/>
    <lineage>
        <taxon>Bacteria</taxon>
        <taxon>Pseudomonadati</taxon>
        <taxon>Pseudomonadota</taxon>
        <taxon>Gammaproteobacteria</taxon>
        <taxon>Pseudomonadales</taxon>
        <taxon>Pseudomonadaceae</taxon>
        <taxon>Pseudomonas</taxon>
        <taxon>Pseudomonas syringae</taxon>
    </lineage>
</organism>
<dbReference type="EMBL" id="CP000075">
    <property type="protein sequence ID" value="AAY39686.1"/>
    <property type="molecule type" value="Genomic_DNA"/>
</dbReference>
<dbReference type="RefSeq" id="WP_011269154.1">
    <property type="nucleotide sequence ID" value="NC_007005.1"/>
</dbReference>
<dbReference type="RefSeq" id="YP_237724.1">
    <property type="nucleotide sequence ID" value="NC_007005.1"/>
</dbReference>
<dbReference type="SMR" id="Q4ZMD6"/>
<dbReference type="STRING" id="205918.Psyr_4659"/>
<dbReference type="KEGG" id="psb:Psyr_4659"/>
<dbReference type="PATRIC" id="fig|205918.7.peg.4801"/>
<dbReference type="eggNOG" id="ENOG5030NBE">
    <property type="taxonomic scope" value="Bacteria"/>
</dbReference>
<dbReference type="HOGENOM" id="CLU_505137_0_0_6"/>
<dbReference type="OrthoDB" id="7032675at2"/>
<dbReference type="PHI-base" id="PHI:999"/>
<dbReference type="Proteomes" id="UP000000426">
    <property type="component" value="Chromosome"/>
</dbReference>
<dbReference type="GO" id="GO:0005576">
    <property type="term" value="C:extracellular region"/>
    <property type="evidence" value="ECO:0007669"/>
    <property type="project" value="UniProtKB-SubCell"/>
</dbReference>
<dbReference type="GO" id="GO:0052040">
    <property type="term" value="P:symbiont-mediated perturbation of host programmed cell death"/>
    <property type="evidence" value="ECO:0007669"/>
    <property type="project" value="UniProtKB-KW"/>
</dbReference>
<dbReference type="CDD" id="cd12803">
    <property type="entry name" value="HopAB_BID"/>
    <property type="match status" value="1"/>
</dbReference>
<dbReference type="Gene3D" id="1.20.1280.110">
    <property type="match status" value="1"/>
</dbReference>
<dbReference type="Gene3D" id="3.30.40.110">
    <property type="entry name" value="AvrPtoB, C-terminal domain"/>
    <property type="match status" value="1"/>
</dbReference>
<dbReference type="Gene3D" id="1.20.1280.220">
    <property type="entry name" value="Effector protein HopAB, BAK1-interacting domain"/>
    <property type="match status" value="1"/>
</dbReference>
<dbReference type="InterPro" id="IPR015133">
    <property type="entry name" value="E3_ubiquit_lig_AvrPtoB"/>
</dbReference>
<dbReference type="InterPro" id="IPR031759">
    <property type="entry name" value="HopAB_BAK-bd"/>
</dbReference>
<dbReference type="InterPro" id="IPR038342">
    <property type="entry name" value="HopAB_BAK-bd_sf"/>
</dbReference>
<dbReference type="InterPro" id="IPR038448">
    <property type="entry name" value="HopAB_E3_ubiquit_lig_sf"/>
</dbReference>
<dbReference type="Pfam" id="PF09046">
    <property type="entry name" value="AvrPtoB-E3_ubiq"/>
    <property type="match status" value="1"/>
</dbReference>
<dbReference type="Pfam" id="PF16847">
    <property type="entry name" value="AvrPtoB_bdg"/>
    <property type="match status" value="1"/>
</dbReference>
<proteinExistence type="inferred from homology"/>
<comment type="function">
    <text evidence="1">Effector protein that plays different roles depending on the species and plant cultivars that interact with the pathogen. Acts as a virulence determinant by enhancing the development of disease symptoms and bacterial growth. Acts as an avirulence factor by eliciting hypersensitive response (HR) and plant resistance (By similarity).</text>
</comment>
<comment type="subcellular location">
    <subcellularLocation>
        <location>Secreted</location>
    </subcellularLocation>
    <text evidence="1">Secreted via type III secretion system (T3SS).</text>
</comment>
<comment type="induction">
    <text evidence="3">Transcriptionally induced by HrpL.</text>
</comment>
<comment type="similarity">
    <text evidence="3">Belongs to the HopAB family.</text>
</comment>
<gene>
    <name type="primary">hopAB1</name>
    <name type="ordered locus">Psyr_4659</name>
</gene>
<accession>Q4ZMD6</accession>
<protein>
    <recommendedName>
        <fullName>Effector protein hopAB1</fullName>
    </recommendedName>
</protein>
<name>HPAB1_PSEU2</name>
<feature type="chain" id="PRO_0000236793" description="Effector protein hopAB1">
    <location>
        <begin position="1"/>
        <end position="516"/>
    </location>
</feature>
<feature type="region of interest" description="Disordered" evidence="2">
    <location>
        <begin position="1"/>
        <end position="93"/>
    </location>
</feature>
<feature type="region of interest" description="Disordered" evidence="2">
    <location>
        <begin position="175"/>
        <end position="259"/>
    </location>
</feature>
<feature type="compositionally biased region" description="Basic and acidic residues" evidence="2">
    <location>
        <begin position="16"/>
        <end position="30"/>
    </location>
</feature>
<feature type="compositionally biased region" description="Polar residues" evidence="2">
    <location>
        <begin position="31"/>
        <end position="41"/>
    </location>
</feature>
<feature type="compositionally biased region" description="Pro residues" evidence="2">
    <location>
        <begin position="81"/>
        <end position="90"/>
    </location>
</feature>
<feature type="compositionally biased region" description="Low complexity" evidence="2">
    <location>
        <begin position="183"/>
        <end position="196"/>
    </location>
</feature>
<feature type="compositionally biased region" description="Low complexity" evidence="2">
    <location>
        <begin position="212"/>
        <end position="224"/>
    </location>
</feature>
<reference key="1">
    <citation type="journal article" date="2005" name="Proc. Natl. Acad. Sci. U.S.A.">
        <title>Comparison of the complete genome sequences of Pseudomonas syringae pv. syringae B728a and pv. tomato DC3000.</title>
        <authorList>
            <person name="Feil H."/>
            <person name="Feil W.S."/>
            <person name="Chain P."/>
            <person name="Larimer F."/>
            <person name="Dibartolo G."/>
            <person name="Copeland A."/>
            <person name="Lykidis A."/>
            <person name="Trong S."/>
            <person name="Nolan M."/>
            <person name="Goltsman E."/>
            <person name="Thiel J."/>
            <person name="Malfatti S."/>
            <person name="Loper J.E."/>
            <person name="Lapidus A."/>
            <person name="Detter J.C."/>
            <person name="Land M."/>
            <person name="Richardson P.M."/>
            <person name="Kyrpides N.C."/>
            <person name="Ivanova N."/>
            <person name="Lindow S.E."/>
        </authorList>
    </citation>
    <scope>NUCLEOTIDE SEQUENCE [LARGE SCALE GENOMIC DNA]</scope>
    <source>
        <strain>B728a</strain>
    </source>
</reference>